<name>ATPH_NASOF</name>
<proteinExistence type="inferred from homology"/>
<feature type="chain" id="PRO_0000362937" description="ATP synthase subunit c, chloroplastic">
    <location>
        <begin position="1"/>
        <end position="81"/>
    </location>
</feature>
<feature type="transmembrane region" description="Helical" evidence="1">
    <location>
        <begin position="3"/>
        <end position="23"/>
    </location>
</feature>
<feature type="transmembrane region" description="Helical" evidence="1">
    <location>
        <begin position="57"/>
        <end position="77"/>
    </location>
</feature>
<feature type="site" description="Reversibly protonated during proton transport" evidence="1">
    <location>
        <position position="61"/>
    </location>
</feature>
<dbReference type="EMBL" id="AP009376">
    <property type="protein sequence ID" value="BAF50625.1"/>
    <property type="molecule type" value="Genomic_DNA"/>
</dbReference>
<dbReference type="RefSeq" id="YP_001123801.1">
    <property type="nucleotide sequence ID" value="NC_009275.1"/>
</dbReference>
<dbReference type="SMR" id="A4QLS0"/>
<dbReference type="GeneID" id="4962168"/>
<dbReference type="GO" id="GO:0009535">
    <property type="term" value="C:chloroplast thylakoid membrane"/>
    <property type="evidence" value="ECO:0007669"/>
    <property type="project" value="UniProtKB-SubCell"/>
</dbReference>
<dbReference type="GO" id="GO:0045259">
    <property type="term" value="C:proton-transporting ATP synthase complex"/>
    <property type="evidence" value="ECO:0007669"/>
    <property type="project" value="UniProtKB-KW"/>
</dbReference>
<dbReference type="GO" id="GO:0033177">
    <property type="term" value="C:proton-transporting two-sector ATPase complex, proton-transporting domain"/>
    <property type="evidence" value="ECO:0007669"/>
    <property type="project" value="InterPro"/>
</dbReference>
<dbReference type="GO" id="GO:0008289">
    <property type="term" value="F:lipid binding"/>
    <property type="evidence" value="ECO:0007669"/>
    <property type="project" value="UniProtKB-KW"/>
</dbReference>
<dbReference type="GO" id="GO:0046933">
    <property type="term" value="F:proton-transporting ATP synthase activity, rotational mechanism"/>
    <property type="evidence" value="ECO:0007669"/>
    <property type="project" value="UniProtKB-UniRule"/>
</dbReference>
<dbReference type="CDD" id="cd18183">
    <property type="entry name" value="ATP-synt_Fo_c_ATPH"/>
    <property type="match status" value="1"/>
</dbReference>
<dbReference type="FunFam" id="1.20.20.10:FF:000001">
    <property type="entry name" value="ATP synthase subunit c, chloroplastic"/>
    <property type="match status" value="1"/>
</dbReference>
<dbReference type="Gene3D" id="1.20.20.10">
    <property type="entry name" value="F1F0 ATP synthase subunit C"/>
    <property type="match status" value="1"/>
</dbReference>
<dbReference type="HAMAP" id="MF_01396">
    <property type="entry name" value="ATP_synth_c_bact"/>
    <property type="match status" value="1"/>
</dbReference>
<dbReference type="InterPro" id="IPR005953">
    <property type="entry name" value="ATP_synth_csu_bac/chlpt"/>
</dbReference>
<dbReference type="InterPro" id="IPR000454">
    <property type="entry name" value="ATP_synth_F0_csu"/>
</dbReference>
<dbReference type="InterPro" id="IPR020537">
    <property type="entry name" value="ATP_synth_F0_csu_DDCD_BS"/>
</dbReference>
<dbReference type="InterPro" id="IPR038662">
    <property type="entry name" value="ATP_synth_F0_csu_sf"/>
</dbReference>
<dbReference type="InterPro" id="IPR002379">
    <property type="entry name" value="ATPase_proteolipid_c-like_dom"/>
</dbReference>
<dbReference type="InterPro" id="IPR035921">
    <property type="entry name" value="F/V-ATP_Csub_sf"/>
</dbReference>
<dbReference type="NCBIfam" id="TIGR01260">
    <property type="entry name" value="ATP_synt_c"/>
    <property type="match status" value="1"/>
</dbReference>
<dbReference type="NCBIfam" id="NF005608">
    <property type="entry name" value="PRK07354.1"/>
    <property type="match status" value="1"/>
</dbReference>
<dbReference type="PANTHER" id="PTHR10031">
    <property type="entry name" value="ATP SYNTHASE LIPID-BINDING PROTEIN, MITOCHONDRIAL"/>
    <property type="match status" value="1"/>
</dbReference>
<dbReference type="PANTHER" id="PTHR10031:SF0">
    <property type="entry name" value="ATPASE PROTEIN 9"/>
    <property type="match status" value="1"/>
</dbReference>
<dbReference type="Pfam" id="PF00137">
    <property type="entry name" value="ATP-synt_C"/>
    <property type="match status" value="1"/>
</dbReference>
<dbReference type="PRINTS" id="PR00124">
    <property type="entry name" value="ATPASEC"/>
</dbReference>
<dbReference type="SUPFAM" id="SSF81333">
    <property type="entry name" value="F1F0 ATP synthase subunit C"/>
    <property type="match status" value="1"/>
</dbReference>
<dbReference type="PROSITE" id="PS00605">
    <property type="entry name" value="ATPASE_C"/>
    <property type="match status" value="1"/>
</dbReference>
<evidence type="ECO:0000255" key="1">
    <source>
        <dbReference type="HAMAP-Rule" id="MF_01396"/>
    </source>
</evidence>
<protein>
    <recommendedName>
        <fullName evidence="1">ATP synthase subunit c, chloroplastic</fullName>
    </recommendedName>
    <alternativeName>
        <fullName evidence="1">ATP synthase F(0) sector subunit c</fullName>
    </alternativeName>
    <alternativeName>
        <fullName evidence="1">ATPase subunit III</fullName>
    </alternativeName>
    <alternativeName>
        <fullName evidence="1">F-type ATPase subunit c</fullName>
        <shortName evidence="1">F-ATPase subunit c</shortName>
    </alternativeName>
    <alternativeName>
        <fullName evidence="1">Lipid-binding protein</fullName>
    </alternativeName>
</protein>
<comment type="function">
    <text evidence="1">F(1)F(0) ATP synthase produces ATP from ADP in the presence of a proton or sodium gradient. F-type ATPases consist of two structural domains, F(1) containing the extramembraneous catalytic core and F(0) containing the membrane proton channel, linked together by a central stalk and a peripheral stalk. During catalysis, ATP synthesis in the catalytic domain of F(1) is coupled via a rotary mechanism of the central stalk subunits to proton translocation.</text>
</comment>
<comment type="function">
    <text evidence="1">Key component of the F(0) channel; it plays a direct role in translocation across the membrane. A homomeric c-ring of between 10-14 subunits forms the central stalk rotor element with the F(1) delta and epsilon subunits.</text>
</comment>
<comment type="subunit">
    <text evidence="1">F-type ATPases have 2 components, F(1) - the catalytic core - and F(0) - the membrane proton channel. F(1) has five subunits: alpha(3), beta(3), gamma(1), delta(1), epsilon(1). F(0) has four main subunits: a(1), b(1), b'(1) and c(10-14). The alpha and beta chains form an alternating ring which encloses part of the gamma chain. F(1) is attached to F(0) by a central stalk formed by the gamma and epsilon chains, while a peripheral stalk is formed by the delta, b and b' chains.</text>
</comment>
<comment type="subcellular location">
    <subcellularLocation>
        <location evidence="1">Plastid</location>
        <location evidence="1">Chloroplast thylakoid membrane</location>
        <topology evidence="1">Multi-pass membrane protein</topology>
    </subcellularLocation>
</comment>
<comment type="miscellaneous">
    <text>In plastids the F-type ATPase is also known as CF(1)CF(0).</text>
</comment>
<comment type="similarity">
    <text evidence="1">Belongs to the ATPase C chain family.</text>
</comment>
<organism>
    <name type="scientific">Nasturtium officinale</name>
    <name type="common">Watercress</name>
    <name type="synonym">Rorippa nasturtium-aquaticum</name>
    <dbReference type="NCBI Taxonomy" id="65948"/>
    <lineage>
        <taxon>Eukaryota</taxon>
        <taxon>Viridiplantae</taxon>
        <taxon>Streptophyta</taxon>
        <taxon>Embryophyta</taxon>
        <taxon>Tracheophyta</taxon>
        <taxon>Spermatophyta</taxon>
        <taxon>Magnoliopsida</taxon>
        <taxon>eudicotyledons</taxon>
        <taxon>Gunneridae</taxon>
        <taxon>Pentapetalae</taxon>
        <taxon>rosids</taxon>
        <taxon>malvids</taxon>
        <taxon>Brassicales</taxon>
        <taxon>Brassicaceae</taxon>
        <taxon>Cardamineae</taxon>
        <taxon>Nasturtium</taxon>
    </lineage>
</organism>
<accession>A4QLS0</accession>
<gene>
    <name evidence="1" type="primary">atpH</name>
</gene>
<reference key="1">
    <citation type="submission" date="2007-03" db="EMBL/GenBank/DDBJ databases">
        <title>Sequencing analysis of Nasturtium officinale chloroplast DNA.</title>
        <authorList>
            <person name="Hosouchi T."/>
            <person name="Tsuruoka H."/>
            <person name="Kotani H."/>
        </authorList>
    </citation>
    <scope>NUCLEOTIDE SEQUENCE [LARGE SCALE GENOMIC DNA]</scope>
</reference>
<keyword id="KW-0066">ATP synthesis</keyword>
<keyword id="KW-0138">CF(0)</keyword>
<keyword id="KW-0150">Chloroplast</keyword>
<keyword id="KW-0375">Hydrogen ion transport</keyword>
<keyword id="KW-0406">Ion transport</keyword>
<keyword id="KW-0446">Lipid-binding</keyword>
<keyword id="KW-0472">Membrane</keyword>
<keyword id="KW-0934">Plastid</keyword>
<keyword id="KW-0793">Thylakoid</keyword>
<keyword id="KW-0812">Transmembrane</keyword>
<keyword id="KW-1133">Transmembrane helix</keyword>
<keyword id="KW-0813">Transport</keyword>
<geneLocation type="chloroplast"/>
<sequence length="81" mass="7990">MNPLISAASVIAAGLAVGLASIGPGVGQGTAAGQAVEGIARQPEAEGKIRGTLLLSLAFMEALTIYGLVVALALLFANPFV</sequence>